<dbReference type="EMBL" id="AE009439">
    <property type="protein sequence ID" value="AAM02830.1"/>
    <property type="molecule type" value="Genomic_DNA"/>
</dbReference>
<dbReference type="RefSeq" id="WP_011019985.1">
    <property type="nucleotide sequence ID" value="NC_003551.1"/>
</dbReference>
<dbReference type="SMR" id="Q8TUY4"/>
<dbReference type="FunCoup" id="Q8TUY4">
    <property type="interactions" value="137"/>
</dbReference>
<dbReference type="STRING" id="190192.MK1617"/>
<dbReference type="PaxDb" id="190192-MK1617"/>
<dbReference type="EnsemblBacteria" id="AAM02830">
    <property type="protein sequence ID" value="AAM02830"/>
    <property type="gene ID" value="MK1617"/>
</dbReference>
<dbReference type="GeneID" id="1478212"/>
<dbReference type="KEGG" id="mka:MK1617"/>
<dbReference type="PATRIC" id="fig|190192.8.peg.1780"/>
<dbReference type="HOGENOM" id="CLU_112570_3_2_2"/>
<dbReference type="InParanoid" id="Q8TUY4"/>
<dbReference type="OrthoDB" id="10127at2157"/>
<dbReference type="Proteomes" id="UP000001826">
    <property type="component" value="Chromosome"/>
</dbReference>
<dbReference type="GO" id="GO:0022625">
    <property type="term" value="C:cytosolic large ribosomal subunit"/>
    <property type="evidence" value="ECO:0007669"/>
    <property type="project" value="TreeGrafter"/>
</dbReference>
<dbReference type="GO" id="GO:0003735">
    <property type="term" value="F:structural constituent of ribosome"/>
    <property type="evidence" value="ECO:0007669"/>
    <property type="project" value="InterPro"/>
</dbReference>
<dbReference type="GO" id="GO:0002181">
    <property type="term" value="P:cytoplasmic translation"/>
    <property type="evidence" value="ECO:0007669"/>
    <property type="project" value="TreeGrafter"/>
</dbReference>
<dbReference type="CDD" id="cd00463">
    <property type="entry name" value="Ribosomal_L31e"/>
    <property type="match status" value="1"/>
</dbReference>
<dbReference type="Gene3D" id="3.10.440.10">
    <property type="match status" value="1"/>
</dbReference>
<dbReference type="HAMAP" id="MF_00410">
    <property type="entry name" value="Ribosomal_eL31"/>
    <property type="match status" value="1"/>
</dbReference>
<dbReference type="InterPro" id="IPR000054">
    <property type="entry name" value="Ribosomal_eL31"/>
</dbReference>
<dbReference type="InterPro" id="IPR020052">
    <property type="entry name" value="Ribosomal_eL31_CS"/>
</dbReference>
<dbReference type="InterPro" id="IPR023621">
    <property type="entry name" value="Ribosomal_eL31_dom_sf"/>
</dbReference>
<dbReference type="NCBIfam" id="NF002258">
    <property type="entry name" value="PRK01192.1-1"/>
    <property type="match status" value="1"/>
</dbReference>
<dbReference type="PANTHER" id="PTHR10956">
    <property type="entry name" value="60S RIBOSOMAL PROTEIN L31"/>
    <property type="match status" value="1"/>
</dbReference>
<dbReference type="PANTHER" id="PTHR10956:SF0">
    <property type="entry name" value="60S RIBOSOMAL PROTEIN L31"/>
    <property type="match status" value="1"/>
</dbReference>
<dbReference type="Pfam" id="PF01198">
    <property type="entry name" value="Ribosomal_L31e"/>
    <property type="match status" value="1"/>
</dbReference>
<dbReference type="SMART" id="SM01380">
    <property type="entry name" value="Ribosomal_L31e"/>
    <property type="match status" value="1"/>
</dbReference>
<dbReference type="SUPFAM" id="SSF54575">
    <property type="entry name" value="Ribosomal protein L31e"/>
    <property type="match status" value="1"/>
</dbReference>
<dbReference type="PROSITE" id="PS01144">
    <property type="entry name" value="RIBOSOMAL_L31E"/>
    <property type="match status" value="1"/>
</dbReference>
<feature type="chain" id="PRO_0000153795" description="Large ribosomal subunit protein eL31">
    <location>
        <begin position="1"/>
        <end position="86"/>
    </location>
</feature>
<accession>Q8TUY4</accession>
<keyword id="KW-1185">Reference proteome</keyword>
<keyword id="KW-0687">Ribonucleoprotein</keyword>
<keyword id="KW-0689">Ribosomal protein</keyword>
<sequence>MAEVVDERVYTVPLRDAKKAPLKKRAPRAVKALRQFIERHMKAEEVRIGNDVNEKIWERGIKKPPSKIRVRAVKYADGTVEVRLAE</sequence>
<comment type="similarity">
    <text evidence="1">Belongs to the eukaryotic ribosomal protein eL31 family.</text>
</comment>
<gene>
    <name evidence="1" type="primary">rpl31e</name>
    <name type="ordered locus">MK1617</name>
</gene>
<name>RL31_METKA</name>
<organism>
    <name type="scientific">Methanopyrus kandleri (strain AV19 / DSM 6324 / JCM 9639 / NBRC 100938)</name>
    <dbReference type="NCBI Taxonomy" id="190192"/>
    <lineage>
        <taxon>Archaea</taxon>
        <taxon>Methanobacteriati</taxon>
        <taxon>Methanobacteriota</taxon>
        <taxon>Methanomada group</taxon>
        <taxon>Methanopyri</taxon>
        <taxon>Methanopyrales</taxon>
        <taxon>Methanopyraceae</taxon>
        <taxon>Methanopyrus</taxon>
    </lineage>
</organism>
<evidence type="ECO:0000255" key="1">
    <source>
        <dbReference type="HAMAP-Rule" id="MF_00410"/>
    </source>
</evidence>
<evidence type="ECO:0000305" key="2"/>
<proteinExistence type="inferred from homology"/>
<reference key="1">
    <citation type="journal article" date="2002" name="Proc. Natl. Acad. Sci. U.S.A.">
        <title>The complete genome of hyperthermophile Methanopyrus kandleri AV19 and monophyly of archaeal methanogens.</title>
        <authorList>
            <person name="Slesarev A.I."/>
            <person name="Mezhevaya K.V."/>
            <person name="Makarova K.S."/>
            <person name="Polushin N.N."/>
            <person name="Shcherbinina O.V."/>
            <person name="Shakhova V.V."/>
            <person name="Belova G.I."/>
            <person name="Aravind L."/>
            <person name="Natale D.A."/>
            <person name="Rogozin I.B."/>
            <person name="Tatusov R.L."/>
            <person name="Wolf Y.I."/>
            <person name="Stetter K.O."/>
            <person name="Malykh A.G."/>
            <person name="Koonin E.V."/>
            <person name="Kozyavkin S.A."/>
        </authorList>
    </citation>
    <scope>NUCLEOTIDE SEQUENCE [LARGE SCALE GENOMIC DNA]</scope>
    <source>
        <strain>AV19 / DSM 6324 / JCM 9639 / NBRC 100938</strain>
    </source>
</reference>
<protein>
    <recommendedName>
        <fullName evidence="1">Large ribosomal subunit protein eL31</fullName>
    </recommendedName>
    <alternativeName>
        <fullName evidence="2">50S ribosomal protein L31e</fullName>
    </alternativeName>
</protein>